<dbReference type="EMBL" id="AM040264">
    <property type="protein sequence ID" value="CAJ10588.1"/>
    <property type="molecule type" value="Genomic_DNA"/>
</dbReference>
<dbReference type="RefSeq" id="WP_002963757.1">
    <property type="nucleotide sequence ID" value="NZ_KN046823.1"/>
</dbReference>
<dbReference type="SMR" id="Q2YMU7"/>
<dbReference type="STRING" id="359391.BAB1_0632"/>
<dbReference type="GeneID" id="97534052"/>
<dbReference type="KEGG" id="bmf:BAB1_0632"/>
<dbReference type="PATRIC" id="fig|359391.11.peg.2945"/>
<dbReference type="HOGENOM" id="CLU_079503_1_1_5"/>
<dbReference type="PhylomeDB" id="Q2YMU7"/>
<dbReference type="Proteomes" id="UP000002719">
    <property type="component" value="Chromosome I"/>
</dbReference>
<dbReference type="GO" id="GO:0005886">
    <property type="term" value="C:plasma membrane"/>
    <property type="evidence" value="ECO:0007669"/>
    <property type="project" value="UniProtKB-SubCell"/>
</dbReference>
<dbReference type="GO" id="GO:0020037">
    <property type="term" value="F:heme binding"/>
    <property type="evidence" value="ECO:0007669"/>
    <property type="project" value="InterPro"/>
</dbReference>
<dbReference type="GO" id="GO:0046872">
    <property type="term" value="F:metal ion binding"/>
    <property type="evidence" value="ECO:0007669"/>
    <property type="project" value="UniProtKB-KW"/>
</dbReference>
<dbReference type="GO" id="GO:0017004">
    <property type="term" value="P:cytochrome complex assembly"/>
    <property type="evidence" value="ECO:0007669"/>
    <property type="project" value="UniProtKB-KW"/>
</dbReference>
<dbReference type="Gene3D" id="2.40.50.140">
    <property type="entry name" value="Nucleic acid-binding proteins"/>
    <property type="match status" value="1"/>
</dbReference>
<dbReference type="HAMAP" id="MF_01959">
    <property type="entry name" value="CcmE"/>
    <property type="match status" value="1"/>
</dbReference>
<dbReference type="InterPro" id="IPR004329">
    <property type="entry name" value="CcmE"/>
</dbReference>
<dbReference type="InterPro" id="IPR036127">
    <property type="entry name" value="CcmE-like_sf"/>
</dbReference>
<dbReference type="InterPro" id="IPR012340">
    <property type="entry name" value="NA-bd_OB-fold"/>
</dbReference>
<dbReference type="NCBIfam" id="NF009727">
    <property type="entry name" value="PRK13254.1-1"/>
    <property type="match status" value="1"/>
</dbReference>
<dbReference type="NCBIfam" id="NF009730">
    <property type="entry name" value="PRK13254.1-4"/>
    <property type="match status" value="1"/>
</dbReference>
<dbReference type="NCBIfam" id="NF009731">
    <property type="entry name" value="PRK13254.1-5"/>
    <property type="match status" value="1"/>
</dbReference>
<dbReference type="PANTHER" id="PTHR34128">
    <property type="entry name" value="CYTOCHROME C-TYPE BIOGENESIS PROTEIN CCME HOMOLOG, MITOCHONDRIAL"/>
    <property type="match status" value="1"/>
</dbReference>
<dbReference type="PANTHER" id="PTHR34128:SF2">
    <property type="entry name" value="CYTOCHROME C-TYPE BIOGENESIS PROTEIN CCME HOMOLOG, MITOCHONDRIAL"/>
    <property type="match status" value="1"/>
</dbReference>
<dbReference type="Pfam" id="PF03100">
    <property type="entry name" value="CcmE"/>
    <property type="match status" value="1"/>
</dbReference>
<dbReference type="SUPFAM" id="SSF82093">
    <property type="entry name" value="Heme chaperone CcmE"/>
    <property type="match status" value="1"/>
</dbReference>
<feature type="chain" id="PRO_0000238799" description="Cytochrome c-type biogenesis protein CcmE">
    <location>
        <begin position="1"/>
        <end position="165"/>
    </location>
</feature>
<feature type="topological domain" description="Cytoplasmic" evidence="1">
    <location>
        <begin position="1"/>
        <end position="29"/>
    </location>
</feature>
<feature type="transmembrane region" description="Helical; Signal-anchor for type II membrane protein" evidence="1">
    <location>
        <begin position="30"/>
        <end position="50"/>
    </location>
</feature>
<feature type="topological domain" description="Periplasmic" evidence="1">
    <location>
        <begin position="51"/>
        <end position="165"/>
    </location>
</feature>
<feature type="binding site" description="covalent" evidence="1">
    <location>
        <position position="143"/>
    </location>
    <ligand>
        <name>heme</name>
        <dbReference type="ChEBI" id="CHEBI:30413"/>
    </ligand>
</feature>
<feature type="binding site" description="axial binding residue" evidence="1">
    <location>
        <position position="147"/>
    </location>
    <ligand>
        <name>heme</name>
        <dbReference type="ChEBI" id="CHEBI:30413"/>
    </ligand>
    <ligandPart>
        <name>Fe</name>
        <dbReference type="ChEBI" id="CHEBI:18248"/>
    </ligandPart>
</feature>
<sequence length="165" mass="17977">MSATAEQNARNPKGKGGFARTVSQRKRKRLFLIGGALAVLAVAVGLMLTAFNQDIRFFRTPADLTEQDMTSGARFRLGGLVEEGSVSRTGSELRFTVTDTIKTVKVVFEGIPPDLFREGQGVVAEGRFGSDGLFRADNVLAKHDENYVPKDLADSLKKKGVWEGK</sequence>
<accession>Q2YMU7</accession>
<evidence type="ECO:0000255" key="1">
    <source>
        <dbReference type="HAMAP-Rule" id="MF_01959"/>
    </source>
</evidence>
<proteinExistence type="inferred from homology"/>
<keyword id="KW-0997">Cell inner membrane</keyword>
<keyword id="KW-1003">Cell membrane</keyword>
<keyword id="KW-0201">Cytochrome c-type biogenesis</keyword>
<keyword id="KW-0349">Heme</keyword>
<keyword id="KW-0408">Iron</keyword>
<keyword id="KW-0472">Membrane</keyword>
<keyword id="KW-0479">Metal-binding</keyword>
<keyword id="KW-1185">Reference proteome</keyword>
<keyword id="KW-0735">Signal-anchor</keyword>
<keyword id="KW-0812">Transmembrane</keyword>
<keyword id="KW-1133">Transmembrane helix</keyword>
<protein>
    <recommendedName>
        <fullName evidence="1">Cytochrome c-type biogenesis protein CcmE</fullName>
    </recommendedName>
    <alternativeName>
        <fullName evidence="1">Cytochrome c maturation protein E</fullName>
    </alternativeName>
    <alternativeName>
        <fullName evidence="1">Heme chaperone CcmE</fullName>
    </alternativeName>
</protein>
<organism>
    <name type="scientific">Brucella abortus (strain 2308)</name>
    <dbReference type="NCBI Taxonomy" id="359391"/>
    <lineage>
        <taxon>Bacteria</taxon>
        <taxon>Pseudomonadati</taxon>
        <taxon>Pseudomonadota</taxon>
        <taxon>Alphaproteobacteria</taxon>
        <taxon>Hyphomicrobiales</taxon>
        <taxon>Brucellaceae</taxon>
        <taxon>Brucella/Ochrobactrum group</taxon>
        <taxon>Brucella</taxon>
    </lineage>
</organism>
<comment type="function">
    <text evidence="1">Heme chaperone required for the biogenesis of c-type cytochromes. Transiently binds heme delivered by CcmC and transfers the heme to apo-cytochromes in a process facilitated by CcmF and CcmH.</text>
</comment>
<comment type="subcellular location">
    <subcellularLocation>
        <location evidence="1">Cell inner membrane</location>
        <topology evidence="1">Single-pass type II membrane protein</topology>
        <orientation evidence="1">Periplasmic side</orientation>
    </subcellularLocation>
</comment>
<comment type="similarity">
    <text evidence="1">Belongs to the CcmE/CycJ family.</text>
</comment>
<gene>
    <name evidence="1" type="primary">ccmE</name>
    <name evidence="1" type="synonym">cycJ</name>
    <name type="ordered locus">BAB1_0632</name>
</gene>
<reference key="1">
    <citation type="journal article" date="2005" name="Infect. Immun.">
        <title>Whole-genome analyses of speciation events in pathogenic Brucellae.</title>
        <authorList>
            <person name="Chain P.S."/>
            <person name="Comerci D.J."/>
            <person name="Tolmasky M.E."/>
            <person name="Larimer F.W."/>
            <person name="Malfatti S.A."/>
            <person name="Vergez L.M."/>
            <person name="Aguero F."/>
            <person name="Land M.L."/>
            <person name="Ugalde R.A."/>
            <person name="Garcia E."/>
        </authorList>
    </citation>
    <scope>NUCLEOTIDE SEQUENCE [LARGE SCALE GENOMIC DNA]</scope>
    <source>
        <strain>2308</strain>
    </source>
</reference>
<name>CCME_BRUA2</name>